<feature type="chain" id="PRO_1000189988" description="Coproporphyrin III ferrochelatase">
    <location>
        <begin position="1"/>
        <end position="344"/>
    </location>
</feature>
<feature type="binding site" evidence="1">
    <location>
        <position position="52"/>
    </location>
    <ligand>
        <name>Fe-coproporphyrin III</name>
        <dbReference type="ChEBI" id="CHEBI:68438"/>
    </ligand>
</feature>
<feature type="binding site" evidence="1">
    <location>
        <position position="116"/>
    </location>
    <ligand>
        <name>Fe-coproporphyrin III</name>
        <dbReference type="ChEBI" id="CHEBI:68438"/>
    </ligand>
</feature>
<feature type="binding site" evidence="1">
    <location>
        <position position="172"/>
    </location>
    <ligand>
        <name>Fe(2+)</name>
        <dbReference type="ChEBI" id="CHEBI:29033"/>
    </ligand>
</feature>
<feature type="binding site" evidence="1">
    <location>
        <position position="255"/>
    </location>
    <ligand>
        <name>Fe(2+)</name>
        <dbReference type="ChEBI" id="CHEBI:29033"/>
    </ligand>
</feature>
<gene>
    <name evidence="1" type="primary">cpfC</name>
    <name type="ordered locus">JTY_1522</name>
</gene>
<reference key="1">
    <citation type="journal article" date="2009" name="Vaccine">
        <title>Whole genome sequence analysis of Mycobacterium bovis bacillus Calmette-Guerin (BCG) Tokyo 172: a comparative study of BCG vaccine substrains.</title>
        <authorList>
            <person name="Seki M."/>
            <person name="Honda I."/>
            <person name="Fujita I."/>
            <person name="Yano I."/>
            <person name="Yamamoto S."/>
            <person name="Koyama A."/>
        </authorList>
    </citation>
    <scope>NUCLEOTIDE SEQUENCE [LARGE SCALE GENOMIC DNA]</scope>
    <source>
        <strain>BCG / Tokyo 172 / ATCC 35737 / TMC 1019</strain>
    </source>
</reference>
<evidence type="ECO:0000255" key="1">
    <source>
        <dbReference type="HAMAP-Rule" id="MF_00323"/>
    </source>
</evidence>
<protein>
    <recommendedName>
        <fullName evidence="1">Coproporphyrin III ferrochelatase</fullName>
        <ecNumber evidence="1">4.99.1.9</ecNumber>
    </recommendedName>
</protein>
<dbReference type="EC" id="4.99.1.9" evidence="1"/>
<dbReference type="EMBL" id="AP010918">
    <property type="protein sequence ID" value="BAH25810.1"/>
    <property type="molecule type" value="Genomic_DNA"/>
</dbReference>
<dbReference type="RefSeq" id="WP_003407559.1">
    <property type="nucleotide sequence ID" value="NZ_CP014566.1"/>
</dbReference>
<dbReference type="SMR" id="C1AND1"/>
<dbReference type="KEGG" id="mbt:JTY_1522"/>
<dbReference type="HOGENOM" id="CLU_018884_2_0_11"/>
<dbReference type="UniPathway" id="UPA00252"/>
<dbReference type="GO" id="GO:0005737">
    <property type="term" value="C:cytoplasm"/>
    <property type="evidence" value="ECO:0007669"/>
    <property type="project" value="UniProtKB-SubCell"/>
</dbReference>
<dbReference type="GO" id="GO:0004325">
    <property type="term" value="F:ferrochelatase activity"/>
    <property type="evidence" value="ECO:0007669"/>
    <property type="project" value="UniProtKB-UniRule"/>
</dbReference>
<dbReference type="GO" id="GO:0046872">
    <property type="term" value="F:metal ion binding"/>
    <property type="evidence" value="ECO:0007669"/>
    <property type="project" value="UniProtKB-KW"/>
</dbReference>
<dbReference type="GO" id="GO:0006783">
    <property type="term" value="P:heme biosynthetic process"/>
    <property type="evidence" value="ECO:0007669"/>
    <property type="project" value="UniProtKB-UniRule"/>
</dbReference>
<dbReference type="CDD" id="cd00419">
    <property type="entry name" value="Ferrochelatase_C"/>
    <property type="match status" value="1"/>
</dbReference>
<dbReference type="CDD" id="cd03411">
    <property type="entry name" value="Ferrochelatase_N"/>
    <property type="match status" value="1"/>
</dbReference>
<dbReference type="FunFam" id="3.40.50.1400:FF:000007">
    <property type="entry name" value="Ferrochelatase"/>
    <property type="match status" value="1"/>
</dbReference>
<dbReference type="Gene3D" id="3.40.50.1400">
    <property type="match status" value="2"/>
</dbReference>
<dbReference type="HAMAP" id="MF_00323">
    <property type="entry name" value="Ferrochelatase"/>
    <property type="match status" value="1"/>
</dbReference>
<dbReference type="InterPro" id="IPR001015">
    <property type="entry name" value="Ferrochelatase"/>
</dbReference>
<dbReference type="InterPro" id="IPR019772">
    <property type="entry name" value="Ferrochelatase_AS"/>
</dbReference>
<dbReference type="InterPro" id="IPR033644">
    <property type="entry name" value="Ferrochelatase_C"/>
</dbReference>
<dbReference type="InterPro" id="IPR033659">
    <property type="entry name" value="Ferrochelatase_N"/>
</dbReference>
<dbReference type="NCBIfam" id="TIGR00109">
    <property type="entry name" value="hemH"/>
    <property type="match status" value="1"/>
</dbReference>
<dbReference type="NCBIfam" id="NF000689">
    <property type="entry name" value="PRK00035.2-1"/>
    <property type="match status" value="1"/>
</dbReference>
<dbReference type="PANTHER" id="PTHR11108">
    <property type="entry name" value="FERROCHELATASE"/>
    <property type="match status" value="1"/>
</dbReference>
<dbReference type="PANTHER" id="PTHR11108:SF1">
    <property type="entry name" value="FERROCHELATASE, MITOCHONDRIAL"/>
    <property type="match status" value="1"/>
</dbReference>
<dbReference type="Pfam" id="PF00762">
    <property type="entry name" value="Ferrochelatase"/>
    <property type="match status" value="1"/>
</dbReference>
<dbReference type="SUPFAM" id="SSF53800">
    <property type="entry name" value="Chelatase"/>
    <property type="match status" value="1"/>
</dbReference>
<dbReference type="PROSITE" id="PS00534">
    <property type="entry name" value="FERROCHELATASE"/>
    <property type="match status" value="1"/>
</dbReference>
<organism>
    <name type="scientific">Mycobacterium bovis (strain BCG / Tokyo 172 / ATCC 35737 / TMC 1019)</name>
    <dbReference type="NCBI Taxonomy" id="561275"/>
    <lineage>
        <taxon>Bacteria</taxon>
        <taxon>Bacillati</taxon>
        <taxon>Actinomycetota</taxon>
        <taxon>Actinomycetes</taxon>
        <taxon>Mycobacteriales</taxon>
        <taxon>Mycobacteriaceae</taxon>
        <taxon>Mycobacterium</taxon>
        <taxon>Mycobacterium tuberculosis complex</taxon>
    </lineage>
</organism>
<accession>C1AND1</accession>
<name>CPFC_MYCBT</name>
<proteinExistence type="inferred from homology"/>
<comment type="function">
    <text evidence="1">Involved in coproporphyrin-dependent heme b biosynthesis. Catalyzes the insertion of ferrous iron into coproporphyrin III to form Fe-coproporphyrin III.</text>
</comment>
<comment type="catalytic activity">
    <reaction evidence="1">
        <text>Fe-coproporphyrin III + 2 H(+) = coproporphyrin III + Fe(2+)</text>
        <dbReference type="Rhea" id="RHEA:49572"/>
        <dbReference type="ChEBI" id="CHEBI:15378"/>
        <dbReference type="ChEBI" id="CHEBI:29033"/>
        <dbReference type="ChEBI" id="CHEBI:68438"/>
        <dbReference type="ChEBI" id="CHEBI:131725"/>
        <dbReference type="EC" id="4.99.1.9"/>
    </reaction>
    <physiologicalReaction direction="right-to-left" evidence="1">
        <dbReference type="Rhea" id="RHEA:49574"/>
    </physiologicalReaction>
</comment>
<comment type="pathway">
    <text evidence="1">Porphyrin-containing compound metabolism; protoheme biosynthesis.</text>
</comment>
<comment type="subcellular location">
    <subcellularLocation>
        <location evidence="1">Cytoplasm</location>
    </subcellularLocation>
</comment>
<comment type="similarity">
    <text evidence="1">Belongs to the ferrochelatase family.</text>
</comment>
<keyword id="KW-0963">Cytoplasm</keyword>
<keyword id="KW-0350">Heme biosynthesis</keyword>
<keyword id="KW-0408">Iron</keyword>
<keyword id="KW-0456">Lyase</keyword>
<keyword id="KW-0479">Metal-binding</keyword>
<keyword id="KW-0627">Porphyrin biosynthesis</keyword>
<sequence>MQFDAVLLLSFGGPEGPEQVRPFLENVTRGRGVPAERLDAVAEHYLHFGGVSPINGINRTLIAELEAQQELPVYFGNRNWEPYVEDAVTAMRDNGVRRAAVFATSAWSGYSSCTQYVEDIARARRAAGRDAPELVKLRPYFDHPLFVEMFADAITAAAATVRGDARLVFTAHSIPTAADRRCGPNLYSRQVAYATRLVAAAAGYCDFDLAWQSRSGPPQVPWLEPDVTDQLTGLAGAGINAVIVCPIGFVADHIEVVWDLDHELRLQAEAAGIAYARASTPNADPRFARLARGLIDELRYGRIPARVSGPDPVPGCLSSINGQPCRPPHCVASVSPARPSAGSP</sequence>